<evidence type="ECO:0000255" key="1">
    <source>
        <dbReference type="HAMAP-Rule" id="MF_01306"/>
    </source>
</evidence>
<evidence type="ECO:0000305" key="2"/>
<reference key="1">
    <citation type="submission" date="2006-08" db="EMBL/GenBank/DDBJ databases">
        <title>Complete sequence of Alkalilimnicola ehrilichei MLHE-1.</title>
        <authorList>
            <person name="Copeland A."/>
            <person name="Lucas S."/>
            <person name="Lapidus A."/>
            <person name="Barry K."/>
            <person name="Detter J.C."/>
            <person name="Glavina del Rio T."/>
            <person name="Hammon N."/>
            <person name="Israni S."/>
            <person name="Dalin E."/>
            <person name="Tice H."/>
            <person name="Pitluck S."/>
            <person name="Sims D."/>
            <person name="Brettin T."/>
            <person name="Bruce D."/>
            <person name="Han C."/>
            <person name="Tapia R."/>
            <person name="Gilna P."/>
            <person name="Schmutz J."/>
            <person name="Larimer F."/>
            <person name="Land M."/>
            <person name="Hauser L."/>
            <person name="Kyrpides N."/>
            <person name="Mikhailova N."/>
            <person name="Oremland R.S."/>
            <person name="Hoeft S.E."/>
            <person name="Switzer-Blum J."/>
            <person name="Kulp T."/>
            <person name="King G."/>
            <person name="Tabita R."/>
            <person name="Witte B."/>
            <person name="Santini J.M."/>
            <person name="Basu P."/>
            <person name="Hollibaugh J.T."/>
            <person name="Xie G."/>
            <person name="Stolz J.F."/>
            <person name="Richardson P."/>
        </authorList>
    </citation>
    <scope>NUCLEOTIDE SEQUENCE [LARGE SCALE GENOMIC DNA]</scope>
    <source>
        <strain>ATCC BAA-1101 / DSM 17681 / MLHE-1</strain>
    </source>
</reference>
<gene>
    <name evidence="1" type="primary">rpsD</name>
    <name type="ordered locus">Mlg_0482</name>
</gene>
<name>RS4_ALKEH</name>
<sequence length="206" mass="23480">MARYIGPTCKLARREGTDLFLKSGVRPLDSKCKLDQPPGPKLQRRTRMSDYGLQLREKQKVRRMYGVLERQFRNYYKEAARQKGATGTVLLQLLESRLDNVVYRMGFATTRAEARQLVSHRGVQVNGRVVNVPSMQVSPGDLVGLKEKAQKQLRVQAALEMAQQNGWPAWVEVDPKKFEGTYKARPDRADLSAEINESLIVELYSK</sequence>
<accession>Q0ABF1</accession>
<proteinExistence type="inferred from homology"/>
<comment type="function">
    <text evidence="1">One of the primary rRNA binding proteins, it binds directly to 16S rRNA where it nucleates assembly of the body of the 30S subunit.</text>
</comment>
<comment type="function">
    <text evidence="1">With S5 and S12 plays an important role in translational accuracy.</text>
</comment>
<comment type="subunit">
    <text evidence="1">Part of the 30S ribosomal subunit. Contacts protein S5. The interaction surface between S4 and S5 is involved in control of translational fidelity.</text>
</comment>
<comment type="similarity">
    <text evidence="1">Belongs to the universal ribosomal protein uS4 family.</text>
</comment>
<feature type="chain" id="PRO_0000293233" description="Small ribosomal subunit protein uS4">
    <location>
        <begin position="1"/>
        <end position="206"/>
    </location>
</feature>
<feature type="domain" description="S4 RNA-binding" evidence="1">
    <location>
        <begin position="96"/>
        <end position="157"/>
    </location>
</feature>
<organism>
    <name type="scientific">Alkalilimnicola ehrlichii (strain ATCC BAA-1101 / DSM 17681 / MLHE-1)</name>
    <dbReference type="NCBI Taxonomy" id="187272"/>
    <lineage>
        <taxon>Bacteria</taxon>
        <taxon>Pseudomonadati</taxon>
        <taxon>Pseudomonadota</taxon>
        <taxon>Gammaproteobacteria</taxon>
        <taxon>Chromatiales</taxon>
        <taxon>Ectothiorhodospiraceae</taxon>
        <taxon>Alkalilimnicola</taxon>
    </lineage>
</organism>
<protein>
    <recommendedName>
        <fullName evidence="1">Small ribosomal subunit protein uS4</fullName>
    </recommendedName>
    <alternativeName>
        <fullName evidence="2">30S ribosomal protein S4</fullName>
    </alternativeName>
</protein>
<keyword id="KW-1185">Reference proteome</keyword>
<keyword id="KW-0687">Ribonucleoprotein</keyword>
<keyword id="KW-0689">Ribosomal protein</keyword>
<keyword id="KW-0694">RNA-binding</keyword>
<keyword id="KW-0699">rRNA-binding</keyword>
<dbReference type="EMBL" id="CP000453">
    <property type="protein sequence ID" value="ABI55836.1"/>
    <property type="molecule type" value="Genomic_DNA"/>
</dbReference>
<dbReference type="RefSeq" id="WP_011628231.1">
    <property type="nucleotide sequence ID" value="NC_008340.1"/>
</dbReference>
<dbReference type="SMR" id="Q0ABF1"/>
<dbReference type="KEGG" id="aeh:Mlg_0482"/>
<dbReference type="eggNOG" id="COG0522">
    <property type="taxonomic scope" value="Bacteria"/>
</dbReference>
<dbReference type="HOGENOM" id="CLU_092403_0_2_6"/>
<dbReference type="OrthoDB" id="9803672at2"/>
<dbReference type="Proteomes" id="UP000001962">
    <property type="component" value="Chromosome"/>
</dbReference>
<dbReference type="GO" id="GO:0015935">
    <property type="term" value="C:small ribosomal subunit"/>
    <property type="evidence" value="ECO:0007669"/>
    <property type="project" value="InterPro"/>
</dbReference>
<dbReference type="GO" id="GO:0019843">
    <property type="term" value="F:rRNA binding"/>
    <property type="evidence" value="ECO:0007669"/>
    <property type="project" value="UniProtKB-UniRule"/>
</dbReference>
<dbReference type="GO" id="GO:0003735">
    <property type="term" value="F:structural constituent of ribosome"/>
    <property type="evidence" value="ECO:0007669"/>
    <property type="project" value="InterPro"/>
</dbReference>
<dbReference type="GO" id="GO:0042274">
    <property type="term" value="P:ribosomal small subunit biogenesis"/>
    <property type="evidence" value="ECO:0007669"/>
    <property type="project" value="TreeGrafter"/>
</dbReference>
<dbReference type="GO" id="GO:0006412">
    <property type="term" value="P:translation"/>
    <property type="evidence" value="ECO:0007669"/>
    <property type="project" value="UniProtKB-UniRule"/>
</dbReference>
<dbReference type="CDD" id="cd00165">
    <property type="entry name" value="S4"/>
    <property type="match status" value="1"/>
</dbReference>
<dbReference type="FunFam" id="1.10.1050.10:FF:000001">
    <property type="entry name" value="30S ribosomal protein S4"/>
    <property type="match status" value="1"/>
</dbReference>
<dbReference type="FunFam" id="3.10.290.10:FF:000001">
    <property type="entry name" value="30S ribosomal protein S4"/>
    <property type="match status" value="1"/>
</dbReference>
<dbReference type="Gene3D" id="1.10.1050.10">
    <property type="entry name" value="Ribosomal Protein S4 Delta 41, Chain A, domain 1"/>
    <property type="match status" value="1"/>
</dbReference>
<dbReference type="Gene3D" id="3.10.290.10">
    <property type="entry name" value="RNA-binding S4 domain"/>
    <property type="match status" value="1"/>
</dbReference>
<dbReference type="HAMAP" id="MF_01306_B">
    <property type="entry name" value="Ribosomal_uS4_B"/>
    <property type="match status" value="1"/>
</dbReference>
<dbReference type="InterPro" id="IPR022801">
    <property type="entry name" value="Ribosomal_uS4"/>
</dbReference>
<dbReference type="InterPro" id="IPR005709">
    <property type="entry name" value="Ribosomal_uS4_bac-type"/>
</dbReference>
<dbReference type="InterPro" id="IPR018079">
    <property type="entry name" value="Ribosomal_uS4_CS"/>
</dbReference>
<dbReference type="InterPro" id="IPR001912">
    <property type="entry name" value="Ribosomal_uS4_N"/>
</dbReference>
<dbReference type="InterPro" id="IPR002942">
    <property type="entry name" value="S4_RNA-bd"/>
</dbReference>
<dbReference type="InterPro" id="IPR036986">
    <property type="entry name" value="S4_RNA-bd_sf"/>
</dbReference>
<dbReference type="NCBIfam" id="NF003717">
    <property type="entry name" value="PRK05327.1"/>
    <property type="match status" value="1"/>
</dbReference>
<dbReference type="NCBIfam" id="TIGR01017">
    <property type="entry name" value="rpsD_bact"/>
    <property type="match status" value="1"/>
</dbReference>
<dbReference type="PANTHER" id="PTHR11831">
    <property type="entry name" value="30S 40S RIBOSOMAL PROTEIN"/>
    <property type="match status" value="1"/>
</dbReference>
<dbReference type="PANTHER" id="PTHR11831:SF4">
    <property type="entry name" value="SMALL RIBOSOMAL SUBUNIT PROTEIN US4M"/>
    <property type="match status" value="1"/>
</dbReference>
<dbReference type="Pfam" id="PF00163">
    <property type="entry name" value="Ribosomal_S4"/>
    <property type="match status" value="1"/>
</dbReference>
<dbReference type="Pfam" id="PF01479">
    <property type="entry name" value="S4"/>
    <property type="match status" value="1"/>
</dbReference>
<dbReference type="SMART" id="SM01390">
    <property type="entry name" value="Ribosomal_S4"/>
    <property type="match status" value="1"/>
</dbReference>
<dbReference type="SMART" id="SM00363">
    <property type="entry name" value="S4"/>
    <property type="match status" value="1"/>
</dbReference>
<dbReference type="SUPFAM" id="SSF55174">
    <property type="entry name" value="Alpha-L RNA-binding motif"/>
    <property type="match status" value="1"/>
</dbReference>
<dbReference type="PROSITE" id="PS00632">
    <property type="entry name" value="RIBOSOMAL_S4"/>
    <property type="match status" value="1"/>
</dbReference>
<dbReference type="PROSITE" id="PS50889">
    <property type="entry name" value="S4"/>
    <property type="match status" value="1"/>
</dbReference>